<proteinExistence type="inferred from homology"/>
<evidence type="ECO:0000255" key="1">
    <source>
        <dbReference type="HAMAP-Rule" id="MF_00489"/>
    </source>
</evidence>
<organism>
    <name type="scientific">Shewanella pealeana (strain ATCC 700345 / ANG-SQ1)</name>
    <dbReference type="NCBI Taxonomy" id="398579"/>
    <lineage>
        <taxon>Bacteria</taxon>
        <taxon>Pseudomonadati</taxon>
        <taxon>Pseudomonadota</taxon>
        <taxon>Gammaproteobacteria</taxon>
        <taxon>Alteromonadales</taxon>
        <taxon>Shewanellaceae</taxon>
        <taxon>Shewanella</taxon>
    </lineage>
</organism>
<dbReference type="EMBL" id="CP000851">
    <property type="protein sequence ID" value="ABV88275.1"/>
    <property type="molecule type" value="Genomic_DNA"/>
</dbReference>
<dbReference type="RefSeq" id="WP_012156179.1">
    <property type="nucleotide sequence ID" value="NC_009901.1"/>
</dbReference>
<dbReference type="KEGG" id="spl:Spea_2958"/>
<dbReference type="eggNOG" id="COG1671">
    <property type="taxonomic scope" value="Bacteria"/>
</dbReference>
<dbReference type="HOGENOM" id="CLU_106619_2_1_6"/>
<dbReference type="OrthoDB" id="9798918at2"/>
<dbReference type="Proteomes" id="UP000002608">
    <property type="component" value="Chromosome"/>
</dbReference>
<dbReference type="CDD" id="cd18720">
    <property type="entry name" value="PIN_YqxD-like"/>
    <property type="match status" value="1"/>
</dbReference>
<dbReference type="HAMAP" id="MF_00489">
    <property type="entry name" value="UPF0178"/>
    <property type="match status" value="1"/>
</dbReference>
<dbReference type="InterPro" id="IPR003791">
    <property type="entry name" value="UPF0178"/>
</dbReference>
<dbReference type="NCBIfam" id="NF001095">
    <property type="entry name" value="PRK00124.1"/>
    <property type="match status" value="1"/>
</dbReference>
<dbReference type="PANTHER" id="PTHR35146">
    <property type="entry name" value="UPF0178 PROTEIN YAII"/>
    <property type="match status" value="1"/>
</dbReference>
<dbReference type="PANTHER" id="PTHR35146:SF1">
    <property type="entry name" value="UPF0178 PROTEIN YAII"/>
    <property type="match status" value="1"/>
</dbReference>
<dbReference type="Pfam" id="PF02639">
    <property type="entry name" value="DUF188"/>
    <property type="match status" value="1"/>
</dbReference>
<keyword id="KW-1185">Reference proteome</keyword>
<gene>
    <name type="ordered locus">Spea_2958</name>
</gene>
<feature type="chain" id="PRO_1000081386" description="UPF0178 protein Spea_2958">
    <location>
        <begin position="1"/>
        <end position="151"/>
    </location>
</feature>
<comment type="similarity">
    <text evidence="1">Belongs to the UPF0178 family.</text>
</comment>
<sequence>MKVWVDADACPGVIKEILFRVADRAKVEVTLVANHWMRIPPSPYINLKTVSSGFDVADDEIVKLLSAGDLVITADIPLASEVIDKGGFALNPRGELYTEQNIKSILNMRDFMDTMRASGVQTGGPAAIGASEKQAFGNQLDRFITKNHKPS</sequence>
<accession>A8H6T8</accession>
<name>Y2958_SHEPA</name>
<protein>
    <recommendedName>
        <fullName evidence="1">UPF0178 protein Spea_2958</fullName>
    </recommendedName>
</protein>
<reference key="1">
    <citation type="submission" date="2007-10" db="EMBL/GenBank/DDBJ databases">
        <title>Complete sequence of Shewanella pealeana ATCC 700345.</title>
        <authorList>
            <consortium name="US DOE Joint Genome Institute"/>
            <person name="Copeland A."/>
            <person name="Lucas S."/>
            <person name="Lapidus A."/>
            <person name="Barry K."/>
            <person name="Glavina del Rio T."/>
            <person name="Dalin E."/>
            <person name="Tice H."/>
            <person name="Pitluck S."/>
            <person name="Chertkov O."/>
            <person name="Brettin T."/>
            <person name="Bruce D."/>
            <person name="Detter J.C."/>
            <person name="Han C."/>
            <person name="Schmutz J."/>
            <person name="Larimer F."/>
            <person name="Land M."/>
            <person name="Hauser L."/>
            <person name="Kyrpides N."/>
            <person name="Kim E."/>
            <person name="Zhao J.-S.Z."/>
            <person name="Manno D."/>
            <person name="Hawari J."/>
            <person name="Richardson P."/>
        </authorList>
    </citation>
    <scope>NUCLEOTIDE SEQUENCE [LARGE SCALE GENOMIC DNA]</scope>
    <source>
        <strain>ATCC 700345 / ANG-SQ1</strain>
    </source>
</reference>